<feature type="chain" id="PRO_0000377708" description="Cofilin/actin-depolymerizing factor homolog 2">
    <location>
        <begin position="1"/>
        <end position="143"/>
    </location>
</feature>
<feature type="domain" description="ADF-H" evidence="4">
    <location>
        <begin position="4"/>
        <end position="141"/>
    </location>
</feature>
<comment type="function">
    <text evidence="1">Not involved in actin polymerisation, instead functions to stimulate nucleotide exchange on monomeric actin and influence turnover of the small amount of cytosolic actin microfilaments. Essential for erythrocytic schizogony (By similarity).</text>
</comment>
<comment type="subunit">
    <text evidence="1">Interacts with monomeric actin, does not bind to actin polymers.</text>
</comment>
<comment type="subcellular location">
    <subcellularLocation>
        <location evidence="2">Cytoplasm</location>
    </subcellularLocation>
    <subcellularLocation>
        <location evidence="2">Cytoplasm</location>
        <location evidence="2">Cytoskeleton</location>
    </subcellularLocation>
</comment>
<comment type="similarity">
    <text evidence="3">Belongs to the actin-binding proteins ADF family.</text>
</comment>
<protein>
    <recommendedName>
        <fullName evidence="1">Cofilin/actin-depolymerizing factor homolog 2</fullName>
    </recommendedName>
</protein>
<gene>
    <name type="ORF">PF13_0326</name>
</gene>
<dbReference type="EMBL" id="AL844509">
    <property type="protein sequence ID" value="CAD52734.1"/>
    <property type="molecule type" value="Genomic_DNA"/>
</dbReference>
<dbReference type="RefSeq" id="XP_001350325.1">
    <property type="nucleotide sequence ID" value="XM_001350289.1"/>
</dbReference>
<dbReference type="SMR" id="Q8ID92"/>
<dbReference type="FunCoup" id="Q8ID92">
    <property type="interactions" value="73"/>
</dbReference>
<dbReference type="STRING" id="36329.Q8ID92"/>
<dbReference type="PaxDb" id="5833-PF13_0326"/>
<dbReference type="EnsemblProtists" id="CAD52734">
    <property type="protein sequence ID" value="CAD52734"/>
    <property type="gene ID" value="PF3D7_1361400"/>
</dbReference>
<dbReference type="KEGG" id="pfa:PF3D7_1361400"/>
<dbReference type="VEuPathDB" id="PlasmoDB:PF3D7_1361400"/>
<dbReference type="HOGENOM" id="CLU_094004_3_2_1"/>
<dbReference type="InParanoid" id="Q8ID92"/>
<dbReference type="OMA" id="QCRFAVY"/>
<dbReference type="OrthoDB" id="10249245at2759"/>
<dbReference type="PhylomeDB" id="Q8ID92"/>
<dbReference type="Proteomes" id="UP000001450">
    <property type="component" value="Chromosome 13"/>
</dbReference>
<dbReference type="GO" id="GO:0015629">
    <property type="term" value="C:actin cytoskeleton"/>
    <property type="evidence" value="ECO:0000250"/>
    <property type="project" value="UniProtKB"/>
</dbReference>
<dbReference type="GO" id="GO:0005737">
    <property type="term" value="C:cytoplasm"/>
    <property type="evidence" value="ECO:0000318"/>
    <property type="project" value="GO_Central"/>
</dbReference>
<dbReference type="GO" id="GO:0051015">
    <property type="term" value="F:actin filament binding"/>
    <property type="evidence" value="ECO:0000317"/>
    <property type="project" value="GeneDB"/>
</dbReference>
<dbReference type="GO" id="GO:0003785">
    <property type="term" value="F:actin monomer binding"/>
    <property type="evidence" value="ECO:0000250"/>
    <property type="project" value="UniProtKB"/>
</dbReference>
<dbReference type="GO" id="GO:0030036">
    <property type="term" value="P:actin cytoskeleton organization"/>
    <property type="evidence" value="ECO:0000250"/>
    <property type="project" value="UniProtKB"/>
</dbReference>
<dbReference type="GO" id="GO:0030042">
    <property type="term" value="P:actin filament depolymerization"/>
    <property type="evidence" value="ECO:0000318"/>
    <property type="project" value="GO_Central"/>
</dbReference>
<dbReference type="GO" id="GO:0008154">
    <property type="term" value="P:actin polymerization or depolymerization"/>
    <property type="evidence" value="ECO:0000250"/>
    <property type="project" value="GeneDB"/>
</dbReference>
<dbReference type="GO" id="GO:0060327">
    <property type="term" value="P:cytoplasmic actin-based contraction involved in cell motility"/>
    <property type="evidence" value="ECO:0000250"/>
    <property type="project" value="UniProtKB"/>
</dbReference>
<dbReference type="CDD" id="cd11286">
    <property type="entry name" value="ADF_cofilin_like"/>
    <property type="match status" value="1"/>
</dbReference>
<dbReference type="FunFam" id="3.40.20.10:FF:000051">
    <property type="entry name" value="Actin-depolymerizing factor 2"/>
    <property type="match status" value="1"/>
</dbReference>
<dbReference type="Gene3D" id="3.40.20.10">
    <property type="entry name" value="Severin"/>
    <property type="match status" value="1"/>
</dbReference>
<dbReference type="InterPro" id="IPR002108">
    <property type="entry name" value="ADF-H"/>
</dbReference>
<dbReference type="InterPro" id="IPR029006">
    <property type="entry name" value="ADF-H/Gelsolin-like_dom_sf"/>
</dbReference>
<dbReference type="InterPro" id="IPR017904">
    <property type="entry name" value="ADF/Cofilin"/>
</dbReference>
<dbReference type="PANTHER" id="PTHR11913">
    <property type="entry name" value="COFILIN-RELATED"/>
    <property type="match status" value="1"/>
</dbReference>
<dbReference type="Pfam" id="PF00241">
    <property type="entry name" value="Cofilin_ADF"/>
    <property type="match status" value="1"/>
</dbReference>
<dbReference type="SMART" id="SM00102">
    <property type="entry name" value="ADF"/>
    <property type="match status" value="1"/>
</dbReference>
<dbReference type="SUPFAM" id="SSF55753">
    <property type="entry name" value="Actin depolymerizing proteins"/>
    <property type="match status" value="1"/>
</dbReference>
<dbReference type="PROSITE" id="PS51263">
    <property type="entry name" value="ADF_H"/>
    <property type="match status" value="1"/>
</dbReference>
<accession>Q8ID92</accession>
<organism>
    <name type="scientific">Plasmodium falciparum (isolate 3D7)</name>
    <dbReference type="NCBI Taxonomy" id="36329"/>
    <lineage>
        <taxon>Eukaryota</taxon>
        <taxon>Sar</taxon>
        <taxon>Alveolata</taxon>
        <taxon>Apicomplexa</taxon>
        <taxon>Aconoidasida</taxon>
        <taxon>Haemosporida</taxon>
        <taxon>Plasmodiidae</taxon>
        <taxon>Plasmodium</taxon>
        <taxon>Plasmodium (Laverania)</taxon>
    </lineage>
</organism>
<proteinExistence type="inferred from homology"/>
<evidence type="ECO:0000250" key="1">
    <source>
        <dbReference type="UniProtKB" id="P86292"/>
    </source>
</evidence>
<evidence type="ECO:0000250" key="2">
    <source>
        <dbReference type="UniProtKB" id="Q03048"/>
    </source>
</evidence>
<evidence type="ECO:0000255" key="3"/>
<evidence type="ECO:0000255" key="4">
    <source>
        <dbReference type="PROSITE-ProRule" id="PRU00599"/>
    </source>
</evidence>
<evidence type="ECO:0000312" key="5">
    <source>
        <dbReference type="EMBL" id="CAD52734.1"/>
    </source>
</evidence>
<reference key="1">
    <citation type="journal article" date="2002" name="Nature">
        <title>Genome sequence of the human malaria parasite Plasmodium falciparum.</title>
        <authorList>
            <person name="Gardner M.J."/>
            <person name="Hall N."/>
            <person name="Fung E."/>
            <person name="White O."/>
            <person name="Berriman M."/>
            <person name="Hyman R.W."/>
            <person name="Carlton J.M."/>
            <person name="Pain A."/>
            <person name="Nelson K.E."/>
            <person name="Bowman S."/>
            <person name="Paulsen I.T."/>
            <person name="James K.D."/>
            <person name="Eisen J.A."/>
            <person name="Rutherford K.M."/>
            <person name="Salzberg S.L."/>
            <person name="Craig A."/>
            <person name="Kyes S."/>
            <person name="Chan M.-S."/>
            <person name="Nene V."/>
            <person name="Shallom S.J."/>
            <person name="Suh B."/>
            <person name="Peterson J."/>
            <person name="Angiuoli S."/>
            <person name="Pertea M."/>
            <person name="Allen J."/>
            <person name="Selengut J."/>
            <person name="Haft D."/>
            <person name="Mather M.W."/>
            <person name="Vaidya A.B."/>
            <person name="Martin D.M.A."/>
            <person name="Fairlamb A.H."/>
            <person name="Fraunholz M.J."/>
            <person name="Roos D.S."/>
            <person name="Ralph S.A."/>
            <person name="McFadden G.I."/>
            <person name="Cummings L.M."/>
            <person name="Subramanian G.M."/>
            <person name="Mungall C."/>
            <person name="Venter J.C."/>
            <person name="Carucci D.J."/>
            <person name="Hoffman S.L."/>
            <person name="Newbold C."/>
            <person name="Davis R.W."/>
            <person name="Fraser C.M."/>
            <person name="Barrell B.G."/>
        </authorList>
    </citation>
    <scope>NUCLEOTIDE SEQUENCE [LARGE SCALE GENOMIC DNA]</scope>
    <source>
        <strain>3D7</strain>
    </source>
</reference>
<reference evidence="5" key="2">
    <citation type="journal article" date="2002" name="Nature">
        <title>Sequence of Plasmodium falciparum chromosomes 1, 3-9 and 13.</title>
        <authorList>
            <person name="Hall N."/>
            <person name="Pain A."/>
            <person name="Berriman M."/>
            <person name="Churcher C.M."/>
            <person name="Harris B."/>
            <person name="Harris D."/>
            <person name="Mungall K.L."/>
            <person name="Bowman S."/>
            <person name="Atkin R."/>
            <person name="Baker S."/>
            <person name="Barron A."/>
            <person name="Brooks K."/>
            <person name="Buckee C.O."/>
            <person name="Burrows C."/>
            <person name="Cherevach I."/>
            <person name="Chillingworth C."/>
            <person name="Chillingworth T."/>
            <person name="Christodoulou Z."/>
            <person name="Clark L."/>
            <person name="Clark R."/>
            <person name="Corton C."/>
            <person name="Cronin A."/>
            <person name="Davies R.M."/>
            <person name="Davis P."/>
            <person name="Dear P."/>
            <person name="Dearden F."/>
            <person name="Doggett J."/>
            <person name="Feltwell T."/>
            <person name="Goble A."/>
            <person name="Goodhead I."/>
            <person name="Gwilliam R."/>
            <person name="Hamlin N."/>
            <person name="Hance Z."/>
            <person name="Harper D."/>
            <person name="Hauser H."/>
            <person name="Hornsby T."/>
            <person name="Holroyd S."/>
            <person name="Horrocks P."/>
            <person name="Humphray S."/>
            <person name="Jagels K."/>
            <person name="James K.D."/>
            <person name="Johnson D."/>
            <person name="Kerhornou A."/>
            <person name="Knights A."/>
            <person name="Konfortov B."/>
            <person name="Kyes S."/>
            <person name="Larke N."/>
            <person name="Lawson D."/>
            <person name="Lennard N."/>
            <person name="Line A."/>
            <person name="Maddison M."/>
            <person name="Mclean J."/>
            <person name="Mooney P."/>
            <person name="Moule S."/>
            <person name="Murphy L."/>
            <person name="Oliver K."/>
            <person name="Ormond D."/>
            <person name="Price C."/>
            <person name="Quail M.A."/>
            <person name="Rabbinowitsch E."/>
            <person name="Rajandream M.A."/>
            <person name="Rutter S."/>
            <person name="Rutherford K.M."/>
            <person name="Sanders M."/>
            <person name="Simmonds M."/>
            <person name="Seeger K."/>
            <person name="Sharp S."/>
            <person name="Smith R."/>
            <person name="Squares R."/>
            <person name="Squares S."/>
            <person name="Stevens K."/>
            <person name="Taylor K."/>
            <person name="Tivey A."/>
            <person name="Unwin L."/>
            <person name="Whitehead S."/>
            <person name="Woodward J.R."/>
            <person name="Sulston J.E."/>
            <person name="Craig A."/>
            <person name="Newbold C."/>
            <person name="Barrell B.G."/>
        </authorList>
    </citation>
    <scope>NUCLEOTIDE SEQUENCE [LARGE SCALE GENOMIC DNA]</scope>
    <source>
        <strain>3D7</strain>
    </source>
</reference>
<keyword id="KW-0009">Actin-binding</keyword>
<keyword id="KW-0963">Cytoplasm</keyword>
<keyword id="KW-0206">Cytoskeleton</keyword>
<keyword id="KW-1185">Reference proteome</keyword>
<name>CADF2_PLAF7</name>
<sequence>MVSGVKVSDECVYEFNKLKIKHIHKYIIYRIENYEEVIVDFLEQDNSLKSYKDIIIDIRNNLKTTECRYIIADMPIPTPEGVLRNRIYFIFWSPDLAKSKEKMLYASSKEYLVRKINGIFKSLEITCDLEDFEDELRTIILNT</sequence>